<name>LIGB_PSEU2</name>
<comment type="function">
    <text evidence="1">Catalyzes the formation of phosphodiester linkages between 5'-phosphoryl and 3'-hydroxyl groups in double-stranded DNA using NAD as a coenzyme and as the energy source for the reaction.</text>
</comment>
<comment type="catalytic activity">
    <reaction evidence="1">
        <text>NAD(+) + (deoxyribonucleotide)n-3'-hydroxyl + 5'-phospho-(deoxyribonucleotide)m = (deoxyribonucleotide)n+m + AMP + beta-nicotinamide D-nucleotide.</text>
        <dbReference type="EC" id="6.5.1.2"/>
    </reaction>
</comment>
<comment type="similarity">
    <text evidence="1">Belongs to the NAD-dependent DNA ligase family. LigB subfamily.</text>
</comment>
<sequence>MLPTFRLMTCAIVFVLPGLGHASQCPDWPAAKARSEVTALQQQIAEWDDSYHRQGISQIADELYDQARQKLNLWRSCFAVSTPESDPLKTAVGPLPHPVPHTGVNKLADEGSVKGWLKGRNDLWIQPKVDGVAVTLVYEKGRLVQAISRGDGRKGQDWTSQARLIKAIAQQLPQAESTILQGELYWRLDDHIQAASGSVNARSKVAGLLARQTISPQQADAIGLFVWDWPNGPADMAQRLAGLQAMGFEDSAAYTHPLENYVQAARWREHWYRNPLPFATDGVILRQGQRPPAQRWQASAPYWIAAWKHPYAQALAEVRKVNFKIGRSGRITPVLELTPVRLDDRTVSRISTGSLQRWQTLDIRPGDQIAVSLAGLTIPRLDGVVSRAAERADMIIPRADDFHELSCWQATPGCESQFRARLAWLSGKKGLALPGVGPGTWNTLIDNGQIMGLLDWMTLNHAELVNIPGFAERSSAKLLDSLQTARERPFQTWLKAIGLPPTGGARLPDNWHELAGRSVEQWQAEPGIGPGRAARLRAFFQDPQVQALSQQLQAQSISGFK</sequence>
<proteinExistence type="inferred from homology"/>
<feature type="chain" id="PRO_0000313549" description="DNA ligase B">
    <location>
        <begin position="1"/>
        <end position="561"/>
    </location>
</feature>
<feature type="active site" description="N6-AMP-lysine intermediate" evidence="1">
    <location>
        <position position="128"/>
    </location>
</feature>
<accession>Q4ZLZ9</accession>
<reference key="1">
    <citation type="journal article" date="2005" name="Proc. Natl. Acad. Sci. U.S.A.">
        <title>Comparison of the complete genome sequences of Pseudomonas syringae pv. syringae B728a and pv. tomato DC3000.</title>
        <authorList>
            <person name="Feil H."/>
            <person name="Feil W.S."/>
            <person name="Chain P."/>
            <person name="Larimer F."/>
            <person name="Dibartolo G."/>
            <person name="Copeland A."/>
            <person name="Lykidis A."/>
            <person name="Trong S."/>
            <person name="Nolan M."/>
            <person name="Goltsman E."/>
            <person name="Thiel J."/>
            <person name="Malfatti S."/>
            <person name="Loper J.E."/>
            <person name="Lapidus A."/>
            <person name="Detter J.C."/>
            <person name="Land M."/>
            <person name="Richardson P.M."/>
            <person name="Kyrpides N.C."/>
            <person name="Ivanova N."/>
            <person name="Lindow S.E."/>
        </authorList>
    </citation>
    <scope>NUCLEOTIDE SEQUENCE [LARGE SCALE GENOMIC DNA]</scope>
    <source>
        <strain>B728a</strain>
    </source>
</reference>
<organism>
    <name type="scientific">Pseudomonas syringae pv. syringae (strain B728a)</name>
    <dbReference type="NCBI Taxonomy" id="205918"/>
    <lineage>
        <taxon>Bacteria</taxon>
        <taxon>Pseudomonadati</taxon>
        <taxon>Pseudomonadota</taxon>
        <taxon>Gammaproteobacteria</taxon>
        <taxon>Pseudomonadales</taxon>
        <taxon>Pseudomonadaceae</taxon>
        <taxon>Pseudomonas</taxon>
        <taxon>Pseudomonas syringae</taxon>
    </lineage>
</organism>
<protein>
    <recommendedName>
        <fullName evidence="1">DNA ligase B</fullName>
        <ecNumber evidence="1">6.5.1.2</ecNumber>
    </recommendedName>
    <alternativeName>
        <fullName evidence="1">Polydeoxyribonucleotide synthase [NAD(+)] B</fullName>
    </alternativeName>
</protein>
<gene>
    <name evidence="1" type="primary">ligB</name>
    <name type="ordered locus">Psyr_4796</name>
</gene>
<keyword id="KW-0227">DNA damage</keyword>
<keyword id="KW-0234">DNA repair</keyword>
<keyword id="KW-0235">DNA replication</keyword>
<keyword id="KW-0436">Ligase</keyword>
<keyword id="KW-0520">NAD</keyword>
<evidence type="ECO:0000255" key="1">
    <source>
        <dbReference type="HAMAP-Rule" id="MF_01587"/>
    </source>
</evidence>
<dbReference type="EC" id="6.5.1.2" evidence="1"/>
<dbReference type="EMBL" id="CP000075">
    <property type="protein sequence ID" value="AAY39823.1"/>
    <property type="molecule type" value="Genomic_DNA"/>
</dbReference>
<dbReference type="RefSeq" id="WP_011269232.1">
    <property type="nucleotide sequence ID" value="NC_007005.1"/>
</dbReference>
<dbReference type="RefSeq" id="YP_237861.1">
    <property type="nucleotide sequence ID" value="NC_007005.1"/>
</dbReference>
<dbReference type="SMR" id="Q4ZLZ9"/>
<dbReference type="STRING" id="205918.Psyr_4796"/>
<dbReference type="KEGG" id="psb:Psyr_4796"/>
<dbReference type="PATRIC" id="fig|205918.7.peg.4955"/>
<dbReference type="eggNOG" id="COG0272">
    <property type="taxonomic scope" value="Bacteria"/>
</dbReference>
<dbReference type="HOGENOM" id="CLU_489786_0_0_6"/>
<dbReference type="OrthoDB" id="9759736at2"/>
<dbReference type="Proteomes" id="UP000000426">
    <property type="component" value="Chromosome"/>
</dbReference>
<dbReference type="GO" id="GO:0003911">
    <property type="term" value="F:DNA ligase (NAD+) activity"/>
    <property type="evidence" value="ECO:0007669"/>
    <property type="project" value="UniProtKB-UniRule"/>
</dbReference>
<dbReference type="GO" id="GO:0006281">
    <property type="term" value="P:DNA repair"/>
    <property type="evidence" value="ECO:0007669"/>
    <property type="project" value="UniProtKB-KW"/>
</dbReference>
<dbReference type="GO" id="GO:0006260">
    <property type="term" value="P:DNA replication"/>
    <property type="evidence" value="ECO:0007669"/>
    <property type="project" value="UniProtKB-KW"/>
</dbReference>
<dbReference type="Gene3D" id="1.10.150.20">
    <property type="entry name" value="5' to 3' exonuclease, C-terminal subdomain"/>
    <property type="match status" value="1"/>
</dbReference>
<dbReference type="Gene3D" id="3.30.470.30">
    <property type="entry name" value="DNA ligase/mRNA capping enzyme"/>
    <property type="match status" value="1"/>
</dbReference>
<dbReference type="Gene3D" id="1.10.287.610">
    <property type="entry name" value="Helix hairpin bin"/>
    <property type="match status" value="1"/>
</dbReference>
<dbReference type="Gene3D" id="2.40.50.140">
    <property type="entry name" value="Nucleic acid-binding proteins"/>
    <property type="match status" value="1"/>
</dbReference>
<dbReference type="HAMAP" id="MF_01587">
    <property type="entry name" value="DNA_ligase_B"/>
    <property type="match status" value="1"/>
</dbReference>
<dbReference type="InterPro" id="IPR020923">
    <property type="entry name" value="DNA_ligase_B"/>
</dbReference>
<dbReference type="InterPro" id="IPR033136">
    <property type="entry name" value="DNA_ligase_CS"/>
</dbReference>
<dbReference type="InterPro" id="IPR013839">
    <property type="entry name" value="DNAligase_adenylation"/>
</dbReference>
<dbReference type="InterPro" id="IPR013840">
    <property type="entry name" value="DNAligase_N"/>
</dbReference>
<dbReference type="InterPro" id="IPR012340">
    <property type="entry name" value="NA-bd_OB-fold"/>
</dbReference>
<dbReference type="InterPro" id="IPR050326">
    <property type="entry name" value="NAD_dep_DNA_ligaseB"/>
</dbReference>
<dbReference type="InterPro" id="IPR004150">
    <property type="entry name" value="NAD_DNA_ligase_OB"/>
</dbReference>
<dbReference type="InterPro" id="IPR010994">
    <property type="entry name" value="RuvA_2-like"/>
</dbReference>
<dbReference type="NCBIfam" id="NF005987">
    <property type="entry name" value="PRK08097.1"/>
    <property type="match status" value="1"/>
</dbReference>
<dbReference type="PANTHER" id="PTHR47810">
    <property type="entry name" value="DNA LIGASE"/>
    <property type="match status" value="1"/>
</dbReference>
<dbReference type="PANTHER" id="PTHR47810:SF1">
    <property type="entry name" value="DNA LIGASE B"/>
    <property type="match status" value="1"/>
</dbReference>
<dbReference type="Pfam" id="PF01653">
    <property type="entry name" value="DNA_ligase_aden"/>
    <property type="match status" value="1"/>
</dbReference>
<dbReference type="Pfam" id="PF03120">
    <property type="entry name" value="DNA_ligase_OB"/>
    <property type="match status" value="1"/>
</dbReference>
<dbReference type="SMART" id="SM00532">
    <property type="entry name" value="LIGANc"/>
    <property type="match status" value="1"/>
</dbReference>
<dbReference type="SUPFAM" id="SSF56091">
    <property type="entry name" value="DNA ligase/mRNA capping enzyme, catalytic domain"/>
    <property type="match status" value="1"/>
</dbReference>
<dbReference type="SUPFAM" id="SSF50249">
    <property type="entry name" value="Nucleic acid-binding proteins"/>
    <property type="match status" value="1"/>
</dbReference>
<dbReference type="SUPFAM" id="SSF47781">
    <property type="entry name" value="RuvA domain 2-like"/>
    <property type="match status" value="1"/>
</dbReference>
<dbReference type="PROSITE" id="PS01056">
    <property type="entry name" value="DNA_LIGASE_N2"/>
    <property type="match status" value="1"/>
</dbReference>